<protein>
    <recommendedName>
        <fullName>Superoxide dismutase [Mn/Fe]</fullName>
        <ecNumber evidence="1">1.15.1.1</ecNumber>
    </recommendedName>
</protein>
<evidence type="ECO:0000250" key="1">
    <source>
        <dbReference type="UniProtKB" id="P80293"/>
    </source>
</evidence>
<evidence type="ECO:0000305" key="2"/>
<feature type="chain" id="PRO_0000159998" description="Superoxide dismutase [Mn/Fe]">
    <location>
        <begin position="1"/>
        <end position="209"/>
    </location>
</feature>
<feature type="binding site" evidence="1">
    <location>
        <position position="38"/>
    </location>
    <ligand>
        <name>Fe(3+)</name>
        <dbReference type="ChEBI" id="CHEBI:29034"/>
    </ligand>
</feature>
<feature type="binding site" evidence="1">
    <location>
        <position position="38"/>
    </location>
    <ligand>
        <name>Mn(2+)</name>
        <dbReference type="ChEBI" id="CHEBI:29035"/>
    </ligand>
</feature>
<feature type="binding site" evidence="1">
    <location>
        <position position="90"/>
    </location>
    <ligand>
        <name>Fe(3+)</name>
        <dbReference type="ChEBI" id="CHEBI:29034"/>
    </ligand>
</feature>
<feature type="binding site" evidence="1">
    <location>
        <position position="90"/>
    </location>
    <ligand>
        <name>Mn(2+)</name>
        <dbReference type="ChEBI" id="CHEBI:29035"/>
    </ligand>
</feature>
<feature type="binding site" evidence="1">
    <location>
        <position position="172"/>
    </location>
    <ligand>
        <name>Fe(3+)</name>
        <dbReference type="ChEBI" id="CHEBI:29034"/>
    </ligand>
</feature>
<feature type="binding site" evidence="1">
    <location>
        <position position="172"/>
    </location>
    <ligand>
        <name>Mn(2+)</name>
        <dbReference type="ChEBI" id="CHEBI:29035"/>
    </ligand>
</feature>
<feature type="binding site" evidence="1">
    <location>
        <position position="176"/>
    </location>
    <ligand>
        <name>Fe(3+)</name>
        <dbReference type="ChEBI" id="CHEBI:29034"/>
    </ligand>
</feature>
<feature type="binding site" evidence="1">
    <location>
        <position position="176"/>
    </location>
    <ligand>
        <name>Mn(2+)</name>
        <dbReference type="ChEBI" id="CHEBI:29035"/>
    </ligand>
</feature>
<keyword id="KW-0408">Iron</keyword>
<keyword id="KW-0464">Manganese</keyword>
<keyword id="KW-0479">Metal-binding</keyword>
<keyword id="KW-0560">Oxidoreductase</keyword>
<comment type="function">
    <text evidence="1">Destroys superoxide anion radicals which are normally produced within the cells and which are toxic to biological systems. Catalyzes the dismutation of superoxide anion radicals into O2 and H2O2 by successive reduction and oxidation of the transition metal ion at the active site.</text>
</comment>
<comment type="catalytic activity">
    <reaction evidence="1">
        <text>2 superoxide + 2 H(+) = H2O2 + O2</text>
        <dbReference type="Rhea" id="RHEA:20696"/>
        <dbReference type="ChEBI" id="CHEBI:15378"/>
        <dbReference type="ChEBI" id="CHEBI:15379"/>
        <dbReference type="ChEBI" id="CHEBI:16240"/>
        <dbReference type="ChEBI" id="CHEBI:18421"/>
        <dbReference type="EC" id="1.15.1.1"/>
    </reaction>
    <physiologicalReaction direction="left-to-right" evidence="1">
        <dbReference type="Rhea" id="RHEA:20697"/>
    </physiologicalReaction>
</comment>
<comment type="cofactor">
    <cofactor evidence="1">
        <name>Mn(2+)</name>
        <dbReference type="ChEBI" id="CHEBI:29035"/>
    </cofactor>
    <cofactor evidence="1">
        <name>Fe(3+)</name>
        <dbReference type="ChEBI" id="CHEBI:29034"/>
    </cofactor>
    <text evidence="1">Binds 1 Mn(2+) or Fe(3+) ion per subunit.</text>
</comment>
<comment type="similarity">
    <text evidence="2">Belongs to the iron/manganese superoxide dismutase family.</text>
</comment>
<name>SODF_RICCN</name>
<accession>Q92HJ3</accession>
<organism>
    <name type="scientific">Rickettsia conorii (strain ATCC VR-613 / Malish 7)</name>
    <dbReference type="NCBI Taxonomy" id="272944"/>
    <lineage>
        <taxon>Bacteria</taxon>
        <taxon>Pseudomonadati</taxon>
        <taxon>Pseudomonadota</taxon>
        <taxon>Alphaproteobacteria</taxon>
        <taxon>Rickettsiales</taxon>
        <taxon>Rickettsiaceae</taxon>
        <taxon>Rickettsieae</taxon>
        <taxon>Rickettsia</taxon>
        <taxon>spotted fever group</taxon>
    </lineage>
</organism>
<proteinExistence type="inferred from homology"/>
<dbReference type="EC" id="1.15.1.1" evidence="1"/>
<dbReference type="EMBL" id="AE006914">
    <property type="protein sequence ID" value="AAL03316.1"/>
    <property type="molecule type" value="Genomic_DNA"/>
</dbReference>
<dbReference type="PIR" id="B97797">
    <property type="entry name" value="B97797"/>
</dbReference>
<dbReference type="RefSeq" id="WP_010977391.1">
    <property type="nucleotide sequence ID" value="NC_003103.1"/>
</dbReference>
<dbReference type="SMR" id="Q92HJ3"/>
<dbReference type="GeneID" id="927465"/>
<dbReference type="KEGG" id="rco:RC0778"/>
<dbReference type="HOGENOM" id="CLU_031625_0_0_5"/>
<dbReference type="Proteomes" id="UP000000816">
    <property type="component" value="Chromosome"/>
</dbReference>
<dbReference type="GO" id="GO:0046872">
    <property type="term" value="F:metal ion binding"/>
    <property type="evidence" value="ECO:0007669"/>
    <property type="project" value="UniProtKB-KW"/>
</dbReference>
<dbReference type="GO" id="GO:0004784">
    <property type="term" value="F:superoxide dismutase activity"/>
    <property type="evidence" value="ECO:0007669"/>
    <property type="project" value="UniProtKB-EC"/>
</dbReference>
<dbReference type="FunFam" id="3.55.40.20:FF:000001">
    <property type="entry name" value="Superoxide dismutase"/>
    <property type="match status" value="1"/>
</dbReference>
<dbReference type="Gene3D" id="1.10.287.990">
    <property type="entry name" value="Fe,Mn superoxide dismutase (SOD) domain"/>
    <property type="match status" value="1"/>
</dbReference>
<dbReference type="Gene3D" id="3.55.40.20">
    <property type="entry name" value="Iron/manganese superoxide dismutase, C-terminal domain"/>
    <property type="match status" value="1"/>
</dbReference>
<dbReference type="InterPro" id="IPR001189">
    <property type="entry name" value="Mn/Fe_SOD"/>
</dbReference>
<dbReference type="InterPro" id="IPR019833">
    <property type="entry name" value="Mn/Fe_SOD_BS"/>
</dbReference>
<dbReference type="InterPro" id="IPR019832">
    <property type="entry name" value="Mn/Fe_SOD_C"/>
</dbReference>
<dbReference type="InterPro" id="IPR019831">
    <property type="entry name" value="Mn/Fe_SOD_N"/>
</dbReference>
<dbReference type="InterPro" id="IPR036324">
    <property type="entry name" value="Mn/Fe_SOD_N_sf"/>
</dbReference>
<dbReference type="InterPro" id="IPR036314">
    <property type="entry name" value="SOD_C_sf"/>
</dbReference>
<dbReference type="PANTHER" id="PTHR42769">
    <property type="entry name" value="SUPEROXIDE DISMUTASE"/>
    <property type="match status" value="1"/>
</dbReference>
<dbReference type="PANTHER" id="PTHR42769:SF3">
    <property type="entry name" value="SUPEROXIDE DISMUTASE [FE] 2, CHLOROPLASTIC"/>
    <property type="match status" value="1"/>
</dbReference>
<dbReference type="Pfam" id="PF02777">
    <property type="entry name" value="Sod_Fe_C"/>
    <property type="match status" value="1"/>
</dbReference>
<dbReference type="Pfam" id="PF00081">
    <property type="entry name" value="Sod_Fe_N"/>
    <property type="match status" value="1"/>
</dbReference>
<dbReference type="PIRSF" id="PIRSF000349">
    <property type="entry name" value="SODismutase"/>
    <property type="match status" value="1"/>
</dbReference>
<dbReference type="PRINTS" id="PR01703">
    <property type="entry name" value="MNSODISMTASE"/>
</dbReference>
<dbReference type="SUPFAM" id="SSF54719">
    <property type="entry name" value="Fe,Mn superoxide dismutase (SOD), C-terminal domain"/>
    <property type="match status" value="1"/>
</dbReference>
<dbReference type="SUPFAM" id="SSF46609">
    <property type="entry name" value="Fe,Mn superoxide dismutase (SOD), N-terminal domain"/>
    <property type="match status" value="1"/>
</dbReference>
<dbReference type="PROSITE" id="PS00088">
    <property type="entry name" value="SOD_MN"/>
    <property type="match status" value="1"/>
</dbReference>
<sequence>MTYCNKSNQTSYPFILPDLPYEKESFKPHFTLETFDYHHGKHHNTYVQNLNNLLKDKEELQKKDLEEIIEWSSQNSNAAIFNNAAQIWNHTFFWHSIKPQGGGKPSGKILEQINKDFGSFEEFCEQFKQEAVGQFGSGWAWLIYHDNRLQIIKTANAGTPIAHGMKPLLACDVWEHAYYIDYRNKRPDYVDIFIKHMINWKFVEDNLIK</sequence>
<reference key="1">
    <citation type="journal article" date="2001" name="Science">
        <title>Mechanisms of evolution in Rickettsia conorii and R. prowazekii.</title>
        <authorList>
            <person name="Ogata H."/>
            <person name="Audic S."/>
            <person name="Renesto-Audiffren P."/>
            <person name="Fournier P.-E."/>
            <person name="Barbe V."/>
            <person name="Samson D."/>
            <person name="Roux V."/>
            <person name="Cossart P."/>
            <person name="Weissenbach J."/>
            <person name="Claverie J.-M."/>
            <person name="Raoult D."/>
        </authorList>
    </citation>
    <scope>NUCLEOTIDE SEQUENCE [LARGE SCALE GENOMIC DNA]</scope>
    <source>
        <strain>ATCC VR-613 / Malish 7</strain>
    </source>
</reference>
<gene>
    <name type="primary">sodB</name>
    <name type="ordered locus">RC0778</name>
</gene>